<organism>
    <name type="scientific">Saccharomyces cerevisiae (strain ATCC 204508 / S288c)</name>
    <name type="common">Baker's yeast</name>
    <dbReference type="NCBI Taxonomy" id="559292"/>
    <lineage>
        <taxon>Eukaryota</taxon>
        <taxon>Fungi</taxon>
        <taxon>Dikarya</taxon>
        <taxon>Ascomycota</taxon>
        <taxon>Saccharomycotina</taxon>
        <taxon>Saccharomycetes</taxon>
        <taxon>Saccharomycetales</taxon>
        <taxon>Saccharomycetaceae</taxon>
        <taxon>Saccharomyces</taxon>
    </lineage>
</organism>
<reference key="1">
    <citation type="journal article" date="1997" name="Nature">
        <title>The nucleotide sequence of Saccharomyces cerevisiae chromosome XIV and its evolutionary implications.</title>
        <authorList>
            <person name="Philippsen P."/>
            <person name="Kleine K."/>
            <person name="Poehlmann R."/>
            <person name="Duesterhoeft A."/>
            <person name="Hamberg K."/>
            <person name="Hegemann J.H."/>
            <person name="Obermaier B."/>
            <person name="Urrestarazu L.A."/>
            <person name="Aert R."/>
            <person name="Albermann K."/>
            <person name="Altmann R."/>
            <person name="Andre B."/>
            <person name="Baladron V."/>
            <person name="Ballesta J.P.G."/>
            <person name="Becam A.-M."/>
            <person name="Beinhauer J.D."/>
            <person name="Boskovic J."/>
            <person name="Buitrago M.J."/>
            <person name="Bussereau F."/>
            <person name="Coster F."/>
            <person name="Crouzet M."/>
            <person name="D'Angelo M."/>
            <person name="Dal Pero F."/>
            <person name="De Antoni A."/>
            <person name="del Rey F."/>
            <person name="Doignon F."/>
            <person name="Domdey H."/>
            <person name="Dubois E."/>
            <person name="Fiedler T.A."/>
            <person name="Fleig U."/>
            <person name="Floeth M."/>
            <person name="Fritz C."/>
            <person name="Gaillardin C."/>
            <person name="Garcia-Cantalejo J.M."/>
            <person name="Glansdorff N."/>
            <person name="Goffeau A."/>
            <person name="Gueldener U."/>
            <person name="Herbert C.J."/>
            <person name="Heumann K."/>
            <person name="Heuss-Neitzel D."/>
            <person name="Hilbert H."/>
            <person name="Hinni K."/>
            <person name="Iraqui Houssaini I."/>
            <person name="Jacquet M."/>
            <person name="Jimenez A."/>
            <person name="Jonniaux J.-L."/>
            <person name="Karpfinger-Hartl L."/>
            <person name="Lanfranchi G."/>
            <person name="Lepingle A."/>
            <person name="Levesque H."/>
            <person name="Lyck R."/>
            <person name="Maftahi M."/>
            <person name="Mallet L."/>
            <person name="Maurer C.T.C."/>
            <person name="Messenguy F."/>
            <person name="Mewes H.-W."/>
            <person name="Moestl D."/>
            <person name="Nasr F."/>
            <person name="Nicaud J.-M."/>
            <person name="Niedenthal R.K."/>
            <person name="Pandolfo D."/>
            <person name="Pierard A."/>
            <person name="Piravandi E."/>
            <person name="Planta R.J."/>
            <person name="Pohl T.M."/>
            <person name="Purnelle B."/>
            <person name="Rebischung C."/>
            <person name="Remacha M.A."/>
            <person name="Revuelta J.L."/>
            <person name="Rinke M."/>
            <person name="Saiz J.E."/>
            <person name="Sartorello F."/>
            <person name="Scherens B."/>
            <person name="Sen-Gupta M."/>
            <person name="Soler-Mira A."/>
            <person name="Urbanus J.H.M."/>
            <person name="Valle G."/>
            <person name="Van Dyck L."/>
            <person name="Verhasselt P."/>
            <person name="Vierendeels F."/>
            <person name="Vissers S."/>
            <person name="Voet M."/>
            <person name="Volckaert G."/>
            <person name="Wach A."/>
            <person name="Wambutt R."/>
            <person name="Wedler H."/>
            <person name="Zollner A."/>
            <person name="Hani J."/>
        </authorList>
    </citation>
    <scope>NUCLEOTIDE SEQUENCE [LARGE SCALE GENOMIC DNA]</scope>
    <source>
        <strain>ATCC 204508 / S288c</strain>
    </source>
</reference>
<reference key="2">
    <citation type="journal article" date="2014" name="G3 (Bethesda)">
        <title>The reference genome sequence of Saccharomyces cerevisiae: Then and now.</title>
        <authorList>
            <person name="Engel S.R."/>
            <person name="Dietrich F.S."/>
            <person name="Fisk D.G."/>
            <person name="Binkley G."/>
            <person name="Balakrishnan R."/>
            <person name="Costanzo M.C."/>
            <person name="Dwight S.S."/>
            <person name="Hitz B.C."/>
            <person name="Karra K."/>
            <person name="Nash R.S."/>
            <person name="Weng S."/>
            <person name="Wong E.D."/>
            <person name="Lloyd P."/>
            <person name="Skrzypek M.S."/>
            <person name="Miyasato S.R."/>
            <person name="Simison M."/>
            <person name="Cherry J.M."/>
        </authorList>
    </citation>
    <scope>GENOME REANNOTATION</scope>
    <source>
        <strain>ATCC 204508 / S288c</strain>
    </source>
</reference>
<reference key="3">
    <citation type="journal article" date="2007" name="Genome Res.">
        <title>Approaching a complete repository of sequence-verified protein-encoding clones for Saccharomyces cerevisiae.</title>
        <authorList>
            <person name="Hu Y."/>
            <person name="Rolfs A."/>
            <person name="Bhullar B."/>
            <person name="Murthy T.V.S."/>
            <person name="Zhu C."/>
            <person name="Berger M.F."/>
            <person name="Camargo A.A."/>
            <person name="Kelley F."/>
            <person name="McCarron S."/>
            <person name="Jepson D."/>
            <person name="Richardson A."/>
            <person name="Raphael J."/>
            <person name="Moreira D."/>
            <person name="Taycher E."/>
            <person name="Zuo D."/>
            <person name="Mohr S."/>
            <person name="Kane M.F."/>
            <person name="Williamson J."/>
            <person name="Simpson A.J.G."/>
            <person name="Bulyk M.L."/>
            <person name="Harlow E."/>
            <person name="Marsischky G."/>
            <person name="Kolodner R.D."/>
            <person name="LaBaer J."/>
        </authorList>
    </citation>
    <scope>NUCLEOTIDE SEQUENCE [GENOMIC DNA]</scope>
    <source>
        <strain>ATCC 204508 / S288c</strain>
    </source>
</reference>
<accession>P53754</accession>
<accession>D6W1P3</accession>
<sequence length="272" mass="31219">MRNRQNQKNWTNLRGLLSVEEREKLENLRLELVCMQAANSIPHDPPEISSLETELICLTTNTKDCKPVRFHSDLLLKKHKYNEIKKIFKEILENIEAYRDEFTKNQTKINLLLADDARASLRNRSLDFSDLMPSSIIKDVQVLANMEANVVVMKNALKTKLVGEKSVPVASSPISSIIPRTSRNKKTSPSNYHHSVLSHRKSNEWNQVSSTEYKRTLLLNIKYNDDFKATIVPSFESCLCSRSYFLRVKLHFDKGVGSAEIDIPVQVKNSFI</sequence>
<feature type="chain" id="PRO_0000203485" description="Uncharacterized protein YNR068C">
    <location>
        <begin position="1"/>
        <end position="272"/>
    </location>
</feature>
<proteinExistence type="predicted"/>
<name>YN97_YEAST</name>
<keyword id="KW-1185">Reference proteome</keyword>
<dbReference type="EMBL" id="Z71683">
    <property type="protein sequence ID" value="CAA96350.1"/>
    <property type="molecule type" value="Genomic_DNA"/>
</dbReference>
<dbReference type="EMBL" id="AY558014">
    <property type="protein sequence ID" value="AAS56340.1"/>
    <property type="molecule type" value="Genomic_DNA"/>
</dbReference>
<dbReference type="EMBL" id="BK006947">
    <property type="protein sequence ID" value="DAA10609.1"/>
    <property type="molecule type" value="Genomic_DNA"/>
</dbReference>
<dbReference type="PIR" id="S63400">
    <property type="entry name" value="S63400"/>
</dbReference>
<dbReference type="SMR" id="P53754"/>
<dbReference type="BioGRID" id="35894">
    <property type="interactions" value="47"/>
</dbReference>
<dbReference type="DIP" id="DIP-1978N"/>
<dbReference type="FunCoup" id="P53754">
    <property type="interactions" value="45"/>
</dbReference>
<dbReference type="IntAct" id="P53754">
    <property type="interactions" value="1"/>
</dbReference>
<dbReference type="MINT" id="P53754"/>
<dbReference type="STRING" id="4932.YNR068C"/>
<dbReference type="iPTMnet" id="P53754"/>
<dbReference type="PaxDb" id="4932-YNR068C"/>
<dbReference type="EnsemblFungi" id="YNR068C_mRNA">
    <property type="protein sequence ID" value="YNR068C"/>
    <property type="gene ID" value="YNR068C"/>
</dbReference>
<dbReference type="GeneID" id="855805"/>
<dbReference type="KEGG" id="sce:YNR068C"/>
<dbReference type="AGR" id="SGD:S000005351"/>
<dbReference type="SGD" id="S000005351">
    <property type="gene designation" value="YNR068C"/>
</dbReference>
<dbReference type="VEuPathDB" id="FungiDB:YNR068C"/>
<dbReference type="eggNOG" id="ENOG502QSAC">
    <property type="taxonomic scope" value="Eukaryota"/>
</dbReference>
<dbReference type="GeneTree" id="ENSGT00940000176311"/>
<dbReference type="HOGENOM" id="CLU_847866_0_0_1"/>
<dbReference type="InParanoid" id="P53754"/>
<dbReference type="OMA" id="HDPQEIS"/>
<dbReference type="OrthoDB" id="2283785at2759"/>
<dbReference type="BioCyc" id="YEAST:G3O-33372-MONOMER"/>
<dbReference type="BioGRID-ORCS" id="855805">
    <property type="hits" value="0 hits in 10 CRISPR screens"/>
</dbReference>
<dbReference type="PRO" id="PR:P53754"/>
<dbReference type="Proteomes" id="UP000002311">
    <property type="component" value="Chromosome XIV"/>
</dbReference>
<dbReference type="RNAct" id="P53754">
    <property type="molecule type" value="protein"/>
</dbReference>
<dbReference type="InterPro" id="IPR039634">
    <property type="entry name" value="Bul1-like"/>
</dbReference>
<dbReference type="InterPro" id="IPR022794">
    <property type="entry name" value="Bul1_C"/>
</dbReference>
<dbReference type="PANTHER" id="PTHR31904">
    <property type="entry name" value="BYPASS OF STOP CODON PROTEIN 5-RELATED"/>
    <property type="match status" value="1"/>
</dbReference>
<dbReference type="PANTHER" id="PTHR31904:SF1">
    <property type="entry name" value="BYPASS OF STOP CODON PROTEIN 5-RELATED"/>
    <property type="match status" value="1"/>
</dbReference>
<dbReference type="Pfam" id="PF04426">
    <property type="entry name" value="Bul1_C"/>
    <property type="match status" value="1"/>
</dbReference>
<gene>
    <name type="ordered locus">YNR068C</name>
    <name type="ORF">N3551</name>
</gene>
<protein>
    <recommendedName>
        <fullName>Uncharacterized protein YNR068C</fullName>
    </recommendedName>
</protein>